<evidence type="ECO:0000255" key="1">
    <source>
        <dbReference type="HAMAP-Rule" id="MF_00073"/>
    </source>
</evidence>
<keyword id="KW-0694">RNA-binding</keyword>
<keyword id="KW-0804">Transcription</keyword>
<keyword id="KW-0889">Transcription antitermination</keyword>
<keyword id="KW-0805">Transcription regulation</keyword>
<proteinExistence type="inferred from homology"/>
<gene>
    <name evidence="1" type="primary">nusB</name>
    <name type="ordered locus">Teth514_1534</name>
</gene>
<name>NUSB_THEPX</name>
<accession>B0K0U6</accession>
<dbReference type="EMBL" id="CP000923">
    <property type="protein sequence ID" value="ABY92821.1"/>
    <property type="molecule type" value="Genomic_DNA"/>
</dbReference>
<dbReference type="RefSeq" id="WP_003868781.1">
    <property type="nucleotide sequence ID" value="NC_010320.1"/>
</dbReference>
<dbReference type="SMR" id="B0K0U6"/>
<dbReference type="KEGG" id="tex:Teth514_1534"/>
<dbReference type="HOGENOM" id="CLU_087843_3_3_9"/>
<dbReference type="Proteomes" id="UP000002155">
    <property type="component" value="Chromosome"/>
</dbReference>
<dbReference type="GO" id="GO:0005829">
    <property type="term" value="C:cytosol"/>
    <property type="evidence" value="ECO:0007669"/>
    <property type="project" value="TreeGrafter"/>
</dbReference>
<dbReference type="GO" id="GO:0003723">
    <property type="term" value="F:RNA binding"/>
    <property type="evidence" value="ECO:0007669"/>
    <property type="project" value="UniProtKB-UniRule"/>
</dbReference>
<dbReference type="GO" id="GO:0006353">
    <property type="term" value="P:DNA-templated transcription termination"/>
    <property type="evidence" value="ECO:0007669"/>
    <property type="project" value="UniProtKB-UniRule"/>
</dbReference>
<dbReference type="GO" id="GO:0031564">
    <property type="term" value="P:transcription antitermination"/>
    <property type="evidence" value="ECO:0007669"/>
    <property type="project" value="UniProtKB-KW"/>
</dbReference>
<dbReference type="Gene3D" id="1.10.940.10">
    <property type="entry name" value="NusB-like"/>
    <property type="match status" value="1"/>
</dbReference>
<dbReference type="HAMAP" id="MF_00073">
    <property type="entry name" value="NusB"/>
    <property type="match status" value="1"/>
</dbReference>
<dbReference type="InterPro" id="IPR035926">
    <property type="entry name" value="NusB-like_sf"/>
</dbReference>
<dbReference type="InterPro" id="IPR011605">
    <property type="entry name" value="NusB_fam"/>
</dbReference>
<dbReference type="InterPro" id="IPR006027">
    <property type="entry name" value="NusB_RsmB_TIM44"/>
</dbReference>
<dbReference type="NCBIfam" id="TIGR01951">
    <property type="entry name" value="nusB"/>
    <property type="match status" value="1"/>
</dbReference>
<dbReference type="PANTHER" id="PTHR11078:SF3">
    <property type="entry name" value="ANTITERMINATION NUSB DOMAIN-CONTAINING PROTEIN"/>
    <property type="match status" value="1"/>
</dbReference>
<dbReference type="PANTHER" id="PTHR11078">
    <property type="entry name" value="N UTILIZATION SUBSTANCE PROTEIN B-RELATED"/>
    <property type="match status" value="1"/>
</dbReference>
<dbReference type="Pfam" id="PF01029">
    <property type="entry name" value="NusB"/>
    <property type="match status" value="1"/>
</dbReference>
<dbReference type="SUPFAM" id="SSF48013">
    <property type="entry name" value="NusB-like"/>
    <property type="match status" value="1"/>
</dbReference>
<feature type="chain" id="PRO_1000092596" description="Transcription antitermination protein NusB">
    <location>
        <begin position="1"/>
        <end position="140"/>
    </location>
</feature>
<reference key="1">
    <citation type="submission" date="2008-01" db="EMBL/GenBank/DDBJ databases">
        <title>Complete sequence of Thermoanaerobacter sp. X514.</title>
        <authorList>
            <consortium name="US DOE Joint Genome Institute"/>
            <person name="Copeland A."/>
            <person name="Lucas S."/>
            <person name="Lapidus A."/>
            <person name="Barry K."/>
            <person name="Glavina del Rio T."/>
            <person name="Dalin E."/>
            <person name="Tice H."/>
            <person name="Pitluck S."/>
            <person name="Bruce D."/>
            <person name="Goodwin L."/>
            <person name="Saunders E."/>
            <person name="Brettin T."/>
            <person name="Detter J.C."/>
            <person name="Han C."/>
            <person name="Schmutz J."/>
            <person name="Larimer F."/>
            <person name="Land M."/>
            <person name="Hauser L."/>
            <person name="Kyrpides N."/>
            <person name="Kim E."/>
            <person name="Hemme C."/>
            <person name="Fields M.W."/>
            <person name="He Z."/>
            <person name="Zhou J."/>
            <person name="Richardson P."/>
        </authorList>
    </citation>
    <scope>NUCLEOTIDE SEQUENCE [LARGE SCALE GENOMIC DNA]</scope>
    <source>
        <strain>X514</strain>
    </source>
</reference>
<sequence length="140" mass="16281">MNRTEAREWVVKMLYQYDVSRLPISKILENFYKEKDPGEQKEYIENTVIGAIEHLEEIDKEIERYSQNWALNRMPKIDLAILRCSIYEMQYGNIPVNISINEAVEIAKKYSTEDSPAFINGLLGAFVRDEGLEEGESNDN</sequence>
<organism>
    <name type="scientific">Thermoanaerobacter sp. (strain X514)</name>
    <dbReference type="NCBI Taxonomy" id="399726"/>
    <lineage>
        <taxon>Bacteria</taxon>
        <taxon>Bacillati</taxon>
        <taxon>Bacillota</taxon>
        <taxon>Clostridia</taxon>
        <taxon>Thermoanaerobacterales</taxon>
        <taxon>Thermoanaerobacteraceae</taxon>
        <taxon>Thermoanaerobacter</taxon>
    </lineage>
</organism>
<comment type="function">
    <text evidence="1">Involved in transcription antitermination. Required for transcription of ribosomal RNA (rRNA) genes. Binds specifically to the boxA antiterminator sequence of the ribosomal RNA (rrn) operons.</text>
</comment>
<comment type="similarity">
    <text evidence="1">Belongs to the NusB family.</text>
</comment>
<protein>
    <recommendedName>
        <fullName evidence="1">Transcription antitermination protein NusB</fullName>
    </recommendedName>
    <alternativeName>
        <fullName evidence="1">Antitermination factor NusB</fullName>
    </alternativeName>
</protein>